<evidence type="ECO:0000255" key="1">
    <source>
        <dbReference type="HAMAP-Rule" id="MF_03157"/>
    </source>
</evidence>
<accession>C0NFV9</accession>
<feature type="chain" id="PRO_0000416178" description="ATP-dependent (S)-NAD(P)H-hydrate dehydratase">
    <location>
        <begin position="1"/>
        <end position="368"/>
    </location>
</feature>
<feature type="domain" description="YjeF C-terminal" evidence="1">
    <location>
        <begin position="3"/>
        <end position="359"/>
    </location>
</feature>
<feature type="binding site" evidence="1">
    <location>
        <position position="120"/>
    </location>
    <ligand>
        <name>(6S)-NADPHX</name>
        <dbReference type="ChEBI" id="CHEBI:64076"/>
    </ligand>
</feature>
<feature type="binding site" evidence="1">
    <location>
        <begin position="173"/>
        <end position="179"/>
    </location>
    <ligand>
        <name>(6S)-NADPHX</name>
        <dbReference type="ChEBI" id="CHEBI:64076"/>
    </ligand>
</feature>
<feature type="binding site" evidence="1">
    <location>
        <begin position="217"/>
        <end position="221"/>
    </location>
    <ligand>
        <name>ATP</name>
        <dbReference type="ChEBI" id="CHEBI:30616"/>
    </ligand>
</feature>
<feature type="binding site" evidence="1">
    <location>
        <begin position="236"/>
        <end position="245"/>
    </location>
    <ligand>
        <name>ATP</name>
        <dbReference type="ChEBI" id="CHEBI:30616"/>
    </ligand>
</feature>
<feature type="binding site" evidence="1">
    <location>
        <position position="246"/>
    </location>
    <ligand>
        <name>(6S)-NADPHX</name>
        <dbReference type="ChEBI" id="CHEBI:64076"/>
    </ligand>
</feature>
<keyword id="KW-0067">ATP-binding</keyword>
<keyword id="KW-0963">Cytoplasm</keyword>
<keyword id="KW-0456">Lyase</keyword>
<keyword id="KW-0520">NAD</keyword>
<keyword id="KW-0521">NADP</keyword>
<keyword id="KW-0547">Nucleotide-binding</keyword>
<keyword id="KW-0597">Phosphoprotein</keyword>
<keyword id="KW-1185">Reference proteome</keyword>
<dbReference type="EC" id="4.2.1.93" evidence="1"/>
<dbReference type="EMBL" id="GG663364">
    <property type="protein sequence ID" value="EEH10130.1"/>
    <property type="molecule type" value="Genomic_DNA"/>
</dbReference>
<dbReference type="RefSeq" id="XP_045290610.1">
    <property type="nucleotide sequence ID" value="XM_045428824.1"/>
</dbReference>
<dbReference type="SMR" id="C0NFV9"/>
<dbReference type="FunCoup" id="C0NFV9">
    <property type="interactions" value="136"/>
</dbReference>
<dbReference type="STRING" id="447093.C0NFV9"/>
<dbReference type="GeneID" id="69034791"/>
<dbReference type="HOGENOM" id="CLU_030651_0_0_1"/>
<dbReference type="InParanoid" id="C0NFV9"/>
<dbReference type="Proteomes" id="UP000001631">
    <property type="component" value="Unassembled WGS sequence"/>
</dbReference>
<dbReference type="GO" id="GO:0005737">
    <property type="term" value="C:cytoplasm"/>
    <property type="evidence" value="ECO:0007669"/>
    <property type="project" value="UniProtKB-SubCell"/>
</dbReference>
<dbReference type="GO" id="GO:0005524">
    <property type="term" value="F:ATP binding"/>
    <property type="evidence" value="ECO:0007669"/>
    <property type="project" value="UniProtKB-KW"/>
</dbReference>
<dbReference type="GO" id="GO:0047453">
    <property type="term" value="F:ATP-dependent NAD(P)H-hydrate dehydratase activity"/>
    <property type="evidence" value="ECO:0007669"/>
    <property type="project" value="UniProtKB-UniRule"/>
</dbReference>
<dbReference type="GO" id="GO:0110051">
    <property type="term" value="P:metabolite repair"/>
    <property type="evidence" value="ECO:0007669"/>
    <property type="project" value="TreeGrafter"/>
</dbReference>
<dbReference type="GO" id="GO:0046496">
    <property type="term" value="P:nicotinamide nucleotide metabolic process"/>
    <property type="evidence" value="ECO:0007669"/>
    <property type="project" value="UniProtKB-UniRule"/>
</dbReference>
<dbReference type="CDD" id="cd01171">
    <property type="entry name" value="YXKO-related"/>
    <property type="match status" value="1"/>
</dbReference>
<dbReference type="Gene3D" id="3.40.1190.20">
    <property type="match status" value="1"/>
</dbReference>
<dbReference type="HAMAP" id="MF_01965">
    <property type="entry name" value="NADHX_dehydratase"/>
    <property type="match status" value="1"/>
</dbReference>
<dbReference type="InterPro" id="IPR017953">
    <property type="entry name" value="Carbohydrate_kinase_pred_CS"/>
</dbReference>
<dbReference type="InterPro" id="IPR000631">
    <property type="entry name" value="CARKD"/>
</dbReference>
<dbReference type="InterPro" id="IPR029056">
    <property type="entry name" value="Ribokinase-like"/>
</dbReference>
<dbReference type="NCBIfam" id="TIGR00196">
    <property type="entry name" value="yjeF_cterm"/>
    <property type="match status" value="1"/>
</dbReference>
<dbReference type="PANTHER" id="PTHR12592:SF0">
    <property type="entry name" value="ATP-DEPENDENT (S)-NAD(P)H-HYDRATE DEHYDRATASE"/>
    <property type="match status" value="1"/>
</dbReference>
<dbReference type="PANTHER" id="PTHR12592">
    <property type="entry name" value="ATP-DEPENDENT (S)-NAD(P)H-HYDRATE DEHYDRATASE FAMILY MEMBER"/>
    <property type="match status" value="1"/>
</dbReference>
<dbReference type="Pfam" id="PF01256">
    <property type="entry name" value="Carb_kinase"/>
    <property type="match status" value="1"/>
</dbReference>
<dbReference type="SUPFAM" id="SSF53613">
    <property type="entry name" value="Ribokinase-like"/>
    <property type="match status" value="1"/>
</dbReference>
<dbReference type="PROSITE" id="PS01050">
    <property type="entry name" value="YJEF_C_2"/>
    <property type="match status" value="1"/>
</dbReference>
<dbReference type="PROSITE" id="PS51383">
    <property type="entry name" value="YJEF_C_3"/>
    <property type="match status" value="1"/>
</dbReference>
<gene>
    <name type="ORF">HCBG_01775</name>
</gene>
<reference key="1">
    <citation type="submission" date="2009-02" db="EMBL/GenBank/DDBJ databases">
        <title>The genome sequence of Ajellomyces capsulatus strain G186AR.</title>
        <authorList>
            <person name="Champion M."/>
            <person name="Cuomo C.A."/>
            <person name="Ma L.-J."/>
            <person name="Henn M.R."/>
            <person name="Sil A."/>
            <person name="Goldman B."/>
            <person name="Young S.K."/>
            <person name="Kodira C.D."/>
            <person name="Zeng Q."/>
            <person name="Koehrsen M."/>
            <person name="Alvarado L."/>
            <person name="Berlin A."/>
            <person name="Borenstein D."/>
            <person name="Chen Z."/>
            <person name="Engels R."/>
            <person name="Freedman E."/>
            <person name="Gellesch M."/>
            <person name="Goldberg J."/>
            <person name="Griggs A."/>
            <person name="Gujja S."/>
            <person name="Heiman D."/>
            <person name="Hepburn T."/>
            <person name="Howarth C."/>
            <person name="Jen D."/>
            <person name="Larson L."/>
            <person name="Lewis B."/>
            <person name="Mehta T."/>
            <person name="Park D."/>
            <person name="Pearson M."/>
            <person name="Roberts A."/>
            <person name="Saif S."/>
            <person name="Shea T."/>
            <person name="Shenoy N."/>
            <person name="Sisk P."/>
            <person name="Stolte C."/>
            <person name="Sykes S."/>
            <person name="Walk T."/>
            <person name="White J."/>
            <person name="Yandava C."/>
            <person name="Klein B."/>
            <person name="McEwen J.G."/>
            <person name="Puccia R."/>
            <person name="Goldman G.H."/>
            <person name="Felipe M.S."/>
            <person name="Nino-Vega G."/>
            <person name="San-Blas G."/>
            <person name="Taylor J."/>
            <person name="Mendoza L."/>
            <person name="Galagan J.E."/>
            <person name="Nusbaum C."/>
            <person name="Birren B.W."/>
        </authorList>
    </citation>
    <scope>NUCLEOTIDE SEQUENCE [LARGE SCALE GENOMIC DNA]</scope>
    <source>
        <strain>G186AR / H82 / ATCC MYA-2454 / RMSCC 2432</strain>
    </source>
</reference>
<comment type="function">
    <text evidence="1">Catalyzes the dehydration of the S-form of NAD(P)HX at the expense of ATP, which is converted to ADP. Together with NAD(P)HX epimerase, which catalyzes the epimerization of the S- and R-forms, the enzyme allows the repair of both epimers of NAD(P)HX, a damaged form of NAD(P)H that is a result of enzymatic or heat-dependent hydration.</text>
</comment>
<comment type="catalytic activity">
    <reaction evidence="1">
        <text>(6S)-NADHX + ATP = ADP + phosphate + NADH + H(+)</text>
        <dbReference type="Rhea" id="RHEA:19017"/>
        <dbReference type="ChEBI" id="CHEBI:15378"/>
        <dbReference type="ChEBI" id="CHEBI:30616"/>
        <dbReference type="ChEBI" id="CHEBI:43474"/>
        <dbReference type="ChEBI" id="CHEBI:57945"/>
        <dbReference type="ChEBI" id="CHEBI:64074"/>
        <dbReference type="ChEBI" id="CHEBI:456216"/>
        <dbReference type="EC" id="4.2.1.93"/>
    </reaction>
</comment>
<comment type="catalytic activity">
    <reaction>
        <text>(6S)-NADPHX + ATP = ADP + phosphate + NADPH + H(+)</text>
        <dbReference type="Rhea" id="RHEA:32231"/>
        <dbReference type="ChEBI" id="CHEBI:15378"/>
        <dbReference type="ChEBI" id="CHEBI:30616"/>
        <dbReference type="ChEBI" id="CHEBI:43474"/>
        <dbReference type="ChEBI" id="CHEBI:57783"/>
        <dbReference type="ChEBI" id="CHEBI:64076"/>
        <dbReference type="ChEBI" id="CHEBI:456216"/>
        <dbReference type="EC" id="4.2.1.93"/>
    </reaction>
</comment>
<comment type="cofactor">
    <cofactor evidence="1">
        <name>Mg(2+)</name>
        <dbReference type="ChEBI" id="CHEBI:18420"/>
    </cofactor>
</comment>
<comment type="subcellular location">
    <subcellularLocation>
        <location evidence="1">Cytoplasm</location>
    </subcellularLocation>
</comment>
<comment type="similarity">
    <text evidence="1">Belongs to the NnrD/CARKD family.</text>
</comment>
<sequence length="368" mass="39605">MSSPSKKLLANVRRIVPPMLERFHKGQLGRVAVIGGSAECAPHISLQWHLQGLSHVICEPSSATVIKSYSPNLMVHPILQSSNTVSSFSNSPLPHPHARALAEPVLSFLSRLHVLVIGPGLGRDPVTQEIVTEIIKEARSREIPLVLDADALLLVQEHPDLIHGYTECILTPNVVEFARLAKALRADVSSMPDSDAGKSEACKRLSNALGGVTIIQKGPHDTISNGMVNIVCDVRGGLKRSGGQGDTLTGSLGTLLAWRKAYHEGLWDTGESEASGGRELSRQDIEEDLSICGYESGDDGERDGDKPKKKLSRPATLLLVAWAGSAITRECSRRAFMAKGRSMQASDLTDEVHGSFLDLIGEPEGTKL</sequence>
<proteinExistence type="inferred from homology"/>
<protein>
    <recommendedName>
        <fullName evidence="1">ATP-dependent (S)-NAD(P)H-hydrate dehydratase</fullName>
        <ecNumber evidence="1">4.2.1.93</ecNumber>
    </recommendedName>
    <alternativeName>
        <fullName evidence="1">ATP-dependent NAD(P)HX dehydratase</fullName>
    </alternativeName>
</protein>
<name>NNRD_AJECG</name>
<organism>
    <name type="scientific">Ajellomyces capsulatus (strain G186AR / H82 / ATCC MYA-2454 / RMSCC 2432)</name>
    <name type="common">Darling's disease fungus</name>
    <name type="synonym">Histoplasma capsulatum</name>
    <dbReference type="NCBI Taxonomy" id="447093"/>
    <lineage>
        <taxon>Eukaryota</taxon>
        <taxon>Fungi</taxon>
        <taxon>Dikarya</taxon>
        <taxon>Ascomycota</taxon>
        <taxon>Pezizomycotina</taxon>
        <taxon>Eurotiomycetes</taxon>
        <taxon>Eurotiomycetidae</taxon>
        <taxon>Onygenales</taxon>
        <taxon>Ajellomycetaceae</taxon>
        <taxon>Histoplasma</taxon>
    </lineage>
</organism>